<dbReference type="EC" id="2.7.11.24"/>
<dbReference type="EMBL" id="AF194416">
    <property type="protein sequence ID" value="AAF23903.1"/>
    <property type="status" value="ALT_FRAME"/>
    <property type="molecule type" value="mRNA"/>
</dbReference>
<dbReference type="EMBL" id="AY588939">
    <property type="protein sequence ID" value="AAT00625.1"/>
    <property type="molecule type" value="mRNA"/>
</dbReference>
<dbReference type="EMBL" id="AP004799">
    <property type="protein sequence ID" value="BAD10093.1"/>
    <property type="molecule type" value="Genomic_DNA"/>
</dbReference>
<dbReference type="EMBL" id="AP008208">
    <property type="protein sequence ID" value="BAF07729.1"/>
    <property type="molecule type" value="Genomic_DNA"/>
</dbReference>
<dbReference type="EMBL" id="AP014958">
    <property type="status" value="NOT_ANNOTATED_CDS"/>
    <property type="molecule type" value="Genomic_DNA"/>
</dbReference>
<dbReference type="RefSeq" id="XP_015626451.1">
    <property type="nucleotide sequence ID" value="XM_015770965.1"/>
</dbReference>
<dbReference type="RefSeq" id="XP_015626452.1">
    <property type="nucleotide sequence ID" value="XM_015770966.1"/>
</dbReference>
<dbReference type="RefSeq" id="XP_015626453.1">
    <property type="nucleotide sequence ID" value="XM_015770967.1"/>
</dbReference>
<dbReference type="RefSeq" id="XP_015626454.1">
    <property type="nucleotide sequence ID" value="XM_015770968.1"/>
</dbReference>
<dbReference type="SMR" id="Q0E459"/>
<dbReference type="FunCoup" id="Q0E459">
    <property type="interactions" value="100"/>
</dbReference>
<dbReference type="STRING" id="39947.Q0E459"/>
<dbReference type="PaxDb" id="39947-Q0E459"/>
<dbReference type="EnsemblPlants" id="Os02t0135200-01">
    <property type="protein sequence ID" value="Os02t0135200-01"/>
    <property type="gene ID" value="Os02g0135200"/>
</dbReference>
<dbReference type="GeneID" id="4328223"/>
<dbReference type="Gramene" id="Os02t0135200-01">
    <property type="protein sequence ID" value="Os02t0135200-01"/>
    <property type="gene ID" value="Os02g0135200"/>
</dbReference>
<dbReference type="KEGG" id="dosa:Os02g0135200"/>
<dbReference type="eggNOG" id="KOG0660">
    <property type="taxonomic scope" value="Eukaryota"/>
</dbReference>
<dbReference type="InParanoid" id="Q0E459"/>
<dbReference type="OrthoDB" id="2396at2759"/>
<dbReference type="Proteomes" id="UP000000763">
    <property type="component" value="Chromosome 2"/>
</dbReference>
<dbReference type="Proteomes" id="UP000059680">
    <property type="component" value="Chromosome 2"/>
</dbReference>
<dbReference type="GO" id="GO:0005737">
    <property type="term" value="C:cytoplasm"/>
    <property type="evidence" value="ECO:0000318"/>
    <property type="project" value="GO_Central"/>
</dbReference>
<dbReference type="GO" id="GO:0005634">
    <property type="term" value="C:nucleus"/>
    <property type="evidence" value="ECO:0000318"/>
    <property type="project" value="GO_Central"/>
</dbReference>
<dbReference type="GO" id="GO:0005524">
    <property type="term" value="F:ATP binding"/>
    <property type="evidence" value="ECO:0007669"/>
    <property type="project" value="UniProtKB-KW"/>
</dbReference>
<dbReference type="GO" id="GO:0004707">
    <property type="term" value="F:MAP kinase activity"/>
    <property type="evidence" value="ECO:0007669"/>
    <property type="project" value="UniProtKB-EC"/>
</dbReference>
<dbReference type="GO" id="GO:0106310">
    <property type="term" value="F:protein serine kinase activity"/>
    <property type="evidence" value="ECO:0007669"/>
    <property type="project" value="RHEA"/>
</dbReference>
<dbReference type="GO" id="GO:0004674">
    <property type="term" value="F:protein serine/threonine kinase activity"/>
    <property type="evidence" value="ECO:0000318"/>
    <property type="project" value="GO_Central"/>
</dbReference>
<dbReference type="GO" id="GO:0035556">
    <property type="term" value="P:intracellular signal transduction"/>
    <property type="evidence" value="ECO:0000318"/>
    <property type="project" value="GO_Central"/>
</dbReference>
<dbReference type="CDD" id="cd07859">
    <property type="entry name" value="STKc_TDY_MAPK"/>
    <property type="match status" value="1"/>
</dbReference>
<dbReference type="FunFam" id="1.10.510.10:FF:000017">
    <property type="entry name" value="Mitogen-activated protein kinase"/>
    <property type="match status" value="1"/>
</dbReference>
<dbReference type="FunFam" id="3.30.200.20:FF:000046">
    <property type="entry name" value="Mitogen-activated protein kinase"/>
    <property type="match status" value="1"/>
</dbReference>
<dbReference type="FunFam" id="3.30.200.20:FF:000578">
    <property type="entry name" value="Mitogen-activated protein kinase"/>
    <property type="match status" value="1"/>
</dbReference>
<dbReference type="Gene3D" id="3.30.200.20">
    <property type="entry name" value="Phosphorylase Kinase, domain 1"/>
    <property type="match status" value="1"/>
</dbReference>
<dbReference type="Gene3D" id="1.10.510.10">
    <property type="entry name" value="Transferase(Phosphotransferase) domain 1"/>
    <property type="match status" value="1"/>
</dbReference>
<dbReference type="InterPro" id="IPR011009">
    <property type="entry name" value="Kinase-like_dom_sf"/>
</dbReference>
<dbReference type="InterPro" id="IPR050117">
    <property type="entry name" value="MAP_kinase"/>
</dbReference>
<dbReference type="InterPro" id="IPR003527">
    <property type="entry name" value="MAP_kinase_CS"/>
</dbReference>
<dbReference type="InterPro" id="IPR000719">
    <property type="entry name" value="Prot_kinase_dom"/>
</dbReference>
<dbReference type="InterPro" id="IPR017441">
    <property type="entry name" value="Protein_kinase_ATP_BS"/>
</dbReference>
<dbReference type="PANTHER" id="PTHR24055">
    <property type="entry name" value="MITOGEN-ACTIVATED PROTEIN KINASE"/>
    <property type="match status" value="1"/>
</dbReference>
<dbReference type="Pfam" id="PF00069">
    <property type="entry name" value="Pkinase"/>
    <property type="match status" value="1"/>
</dbReference>
<dbReference type="SMART" id="SM00220">
    <property type="entry name" value="S_TKc"/>
    <property type="match status" value="1"/>
</dbReference>
<dbReference type="SUPFAM" id="SSF56112">
    <property type="entry name" value="Protein kinase-like (PK-like)"/>
    <property type="match status" value="1"/>
</dbReference>
<dbReference type="PROSITE" id="PS01351">
    <property type="entry name" value="MAPK"/>
    <property type="match status" value="1"/>
</dbReference>
<dbReference type="PROSITE" id="PS00107">
    <property type="entry name" value="PROTEIN_KINASE_ATP"/>
    <property type="match status" value="1"/>
</dbReference>
<dbReference type="PROSITE" id="PS50011">
    <property type="entry name" value="PROTEIN_KINASE_DOM"/>
    <property type="match status" value="1"/>
</dbReference>
<keyword id="KW-0067">ATP-binding</keyword>
<keyword id="KW-0418">Kinase</keyword>
<keyword id="KW-0547">Nucleotide-binding</keyword>
<keyword id="KW-0597">Phosphoprotein</keyword>
<keyword id="KW-1185">Reference proteome</keyword>
<keyword id="KW-0723">Serine/threonine-protein kinase</keyword>
<keyword id="KW-0808">Transferase</keyword>
<organism>
    <name type="scientific">Oryza sativa subsp. japonica</name>
    <name type="common">Rice</name>
    <dbReference type="NCBI Taxonomy" id="39947"/>
    <lineage>
        <taxon>Eukaryota</taxon>
        <taxon>Viridiplantae</taxon>
        <taxon>Streptophyta</taxon>
        <taxon>Embryophyta</taxon>
        <taxon>Tracheophyta</taxon>
        <taxon>Spermatophyta</taxon>
        <taxon>Magnoliopsida</taxon>
        <taxon>Liliopsida</taxon>
        <taxon>Poales</taxon>
        <taxon>Poaceae</taxon>
        <taxon>BOP clade</taxon>
        <taxon>Oryzoideae</taxon>
        <taxon>Oryzeae</taxon>
        <taxon>Oryzinae</taxon>
        <taxon>Oryza</taxon>
        <taxon>Oryza sativa</taxon>
    </lineage>
</organism>
<reference key="1">
    <citation type="submission" date="1999-10" db="EMBL/GenBank/DDBJ databases">
        <title>Novel plant MAP kinases phosphorylate defense-related transcription factors.</title>
        <authorList>
            <person name="Cheong Y.H."/>
            <person name="Moon B.C."/>
            <person name="Kim J.K."/>
            <person name="Cho M.J."/>
        </authorList>
    </citation>
    <scope>NUCLEOTIDE SEQUENCE [MRNA]</scope>
</reference>
<reference key="2">
    <citation type="submission" date="2004-04" db="EMBL/GenBank/DDBJ databases">
        <title>Oryza sativa (japonica cultivar-group) wound and blast induced MAPK (BWMK2) mRNA.</title>
        <authorList>
            <person name="Wang D.-P."/>
            <person name="Zhao W.-S."/>
            <person name="Wang M."/>
            <person name="Meng X.-B."/>
            <person name="Lin R.-M."/>
            <person name="Zhang S.-H."/>
            <person name="Peng Y.-L."/>
        </authorList>
    </citation>
    <scope>NUCLEOTIDE SEQUENCE [MRNA]</scope>
    <source>
        <strain>cv. Aichi asahi</strain>
    </source>
</reference>
<reference key="3">
    <citation type="journal article" date="2005" name="Nature">
        <title>The map-based sequence of the rice genome.</title>
        <authorList>
            <consortium name="International rice genome sequencing project (IRGSP)"/>
        </authorList>
    </citation>
    <scope>NUCLEOTIDE SEQUENCE [LARGE SCALE GENOMIC DNA]</scope>
    <source>
        <strain>cv. Nipponbare</strain>
    </source>
</reference>
<reference key="4">
    <citation type="journal article" date="2008" name="Nucleic Acids Res.">
        <title>The rice annotation project database (RAP-DB): 2008 update.</title>
        <authorList>
            <consortium name="The rice annotation project (RAP)"/>
        </authorList>
    </citation>
    <scope>GENOME REANNOTATION</scope>
    <source>
        <strain>cv. Nipponbare</strain>
    </source>
</reference>
<reference key="5">
    <citation type="journal article" date="2013" name="Rice">
        <title>Improvement of the Oryza sativa Nipponbare reference genome using next generation sequence and optical map data.</title>
        <authorList>
            <person name="Kawahara Y."/>
            <person name="de la Bastide M."/>
            <person name="Hamilton J.P."/>
            <person name="Kanamori H."/>
            <person name="McCombie W.R."/>
            <person name="Ouyang S."/>
            <person name="Schwartz D.C."/>
            <person name="Tanaka T."/>
            <person name="Wu J."/>
            <person name="Zhou S."/>
            <person name="Childs K.L."/>
            <person name="Davidson R.M."/>
            <person name="Lin H."/>
            <person name="Quesada-Ocampo L."/>
            <person name="Vaillancourt B."/>
            <person name="Sakai H."/>
            <person name="Lee S.S."/>
            <person name="Kim J."/>
            <person name="Numa H."/>
            <person name="Itoh T."/>
            <person name="Buell C.R."/>
            <person name="Matsumoto T."/>
        </authorList>
    </citation>
    <scope>GENOME REANNOTATION</scope>
    <source>
        <strain>cv. Nipponbare</strain>
    </source>
</reference>
<reference key="6">
    <citation type="journal article" date="2006" name="Mol. Plant Microbe Interact.">
        <title>Molecular analysis of the rice MAP kinase gene family in relation to Magnaporthe grisea infection.</title>
        <authorList>
            <person name="Reyna N.S."/>
            <person name="Yang Y."/>
        </authorList>
    </citation>
    <scope>INDUCTION</scope>
    <scope>NOMENCLATURE</scope>
</reference>
<name>MPK13_ORYSJ</name>
<comment type="catalytic activity">
    <reaction>
        <text>L-seryl-[protein] + ATP = O-phospho-L-seryl-[protein] + ADP + H(+)</text>
        <dbReference type="Rhea" id="RHEA:17989"/>
        <dbReference type="Rhea" id="RHEA-COMP:9863"/>
        <dbReference type="Rhea" id="RHEA-COMP:11604"/>
        <dbReference type="ChEBI" id="CHEBI:15378"/>
        <dbReference type="ChEBI" id="CHEBI:29999"/>
        <dbReference type="ChEBI" id="CHEBI:30616"/>
        <dbReference type="ChEBI" id="CHEBI:83421"/>
        <dbReference type="ChEBI" id="CHEBI:456216"/>
        <dbReference type="EC" id="2.7.11.24"/>
    </reaction>
</comment>
<comment type="catalytic activity">
    <reaction>
        <text>L-threonyl-[protein] + ATP = O-phospho-L-threonyl-[protein] + ADP + H(+)</text>
        <dbReference type="Rhea" id="RHEA:46608"/>
        <dbReference type="Rhea" id="RHEA-COMP:11060"/>
        <dbReference type="Rhea" id="RHEA-COMP:11605"/>
        <dbReference type="ChEBI" id="CHEBI:15378"/>
        <dbReference type="ChEBI" id="CHEBI:30013"/>
        <dbReference type="ChEBI" id="CHEBI:30616"/>
        <dbReference type="ChEBI" id="CHEBI:61977"/>
        <dbReference type="ChEBI" id="CHEBI:456216"/>
        <dbReference type="EC" id="2.7.11.24"/>
    </reaction>
</comment>
<comment type="activity regulation">
    <text evidence="1">Activated by threonine and tyrosine phosphorylation.</text>
</comment>
<comment type="induction">
    <text evidence="4">By salicylic acid (SA), ethylene and infection with rice blast fungus (M.grisea).</text>
</comment>
<comment type="domain">
    <text>The TXY motif contains the threonine and tyrosine residues whose phosphorylation activates the MAP kinases.</text>
</comment>
<comment type="PTM">
    <text evidence="1">Dually phosphorylated on Thr-175 and Tyr-177, which activates the enzyme.</text>
</comment>
<comment type="similarity">
    <text evidence="5">Belongs to the protein kinase superfamily. CMGC Ser/Thr protein kinase family. MAP kinase subfamily.</text>
</comment>
<comment type="sequence caution" evidence="5">
    <conflict type="frameshift">
        <sequence resource="EMBL-CDS" id="AAF23903"/>
    </conflict>
</comment>
<proteinExistence type="evidence at transcript level"/>
<evidence type="ECO:0000250" key="1"/>
<evidence type="ECO:0000255" key="2">
    <source>
        <dbReference type="PROSITE-ProRule" id="PRU00159"/>
    </source>
</evidence>
<evidence type="ECO:0000256" key="3">
    <source>
        <dbReference type="SAM" id="MobiDB-lite"/>
    </source>
</evidence>
<evidence type="ECO:0000269" key="4">
    <source>
    </source>
</evidence>
<evidence type="ECO:0000305" key="5"/>
<sequence>MEFFTEYGEASQYQIQEVVGKGSYGVVAAAVDTHTGERVAIKKINDVFEHVSDAIRILREIKVLRLLRHPDIVVIKHIMLPPTRREFRDIYVVFELMESDLHQVIEANHDLSPEHHRFFLYQLLCALKYIHSANVFHRDLKPKNILANSDCKLKICDFGLARVAFNDSPSTIFWTDYVATRWYRAPELCGSFFSKYTPAIDIWSIGCIFAEILTGRPLFPGRNVVHQLDLITDLLGTPSSETLSRIRNENARGYLTGMQRKHPIPFSHKFHNADPLALRLLERLLAFDPKDRPTAEEALADPYFRGISKLSREPSRLPVSKFEFEFERRKLTKDDVREMIYREILEYHPQMLQEYIRGGEQISFLYPSGVDRFKRQFAHLEENYSRGERSTPLRRQHASLPRERVCSSVDSNNQDSDNEERRAISSIARTMISPPRSQEKGKNRASAYPNGIINLNSNPKIYLKSASISASTCIIRGNKGPKENGISEDMEEVVYELSDNVTRMLS</sequence>
<gene>
    <name type="primary">MPK13</name>
    <name type="synonym">BIMK2</name>
    <name type="synonym">BWMK2</name>
    <name type="synonym">MAPK2</name>
    <name type="synonym">MPK17-2</name>
    <name type="ordered locus">Os02g0135200</name>
    <name type="ordered locus">LOC_Os02g04230</name>
    <name type="ORF">P0585B01.25</name>
</gene>
<feature type="chain" id="PRO_0000239756" description="Mitogen-activated protein kinase 13">
    <location>
        <begin position="1"/>
        <end position="506"/>
    </location>
</feature>
<feature type="domain" description="Protein kinase" evidence="2">
    <location>
        <begin position="13"/>
        <end position="304"/>
    </location>
</feature>
<feature type="region of interest" description="Disordered" evidence="3">
    <location>
        <begin position="384"/>
        <end position="421"/>
    </location>
</feature>
<feature type="short sequence motif" description="TXY">
    <location>
        <begin position="175"/>
        <end position="177"/>
    </location>
</feature>
<feature type="active site" description="Proton acceptor" evidence="2">
    <location>
        <position position="139"/>
    </location>
</feature>
<feature type="binding site" evidence="2">
    <location>
        <begin position="19"/>
        <end position="27"/>
    </location>
    <ligand>
        <name>ATP</name>
        <dbReference type="ChEBI" id="CHEBI:30616"/>
    </ligand>
</feature>
<feature type="binding site" evidence="2">
    <location>
        <position position="42"/>
    </location>
    <ligand>
        <name>ATP</name>
        <dbReference type="ChEBI" id="CHEBI:30616"/>
    </ligand>
</feature>
<feature type="modified residue" description="Phosphothreonine" evidence="1">
    <location>
        <position position="175"/>
    </location>
</feature>
<feature type="modified residue" description="Phosphotyrosine" evidence="1">
    <location>
        <position position="177"/>
    </location>
</feature>
<accession>Q0E459</accession>
<accession>Q6QUV9</accession>
<accession>Q6Z831</accession>
<accession>Q9SE22</accession>
<protein>
    <recommendedName>
        <fullName>Mitogen-activated protein kinase 13</fullName>
        <shortName>MAP kinase 13</shortName>
        <ecNumber>2.7.11.24</ecNumber>
    </recommendedName>
    <alternativeName>
        <fullName>Benzothiadiazole-induced MAP kinase 2</fullName>
    </alternativeName>
    <alternativeName>
        <fullName>MAP kinase 2</fullName>
    </alternativeName>
    <alternativeName>
        <fullName>OsBIMK2</fullName>
    </alternativeName>
    <alternativeName>
        <fullName>OsBWMK2</fullName>
    </alternativeName>
    <alternativeName>
        <fullName>OsMAPK2</fullName>
    </alternativeName>
    <alternativeName>
        <fullName>OsMPK17-2</fullName>
    </alternativeName>
    <alternativeName>
        <fullName>Wound- and blast-induced MAPK 2</fullName>
    </alternativeName>
</protein>